<accession>Q9BM89</accession>
<protein>
    <recommendedName>
        <fullName>Sex-regulated protein janus-B</fullName>
    </recommendedName>
</protein>
<keyword id="KW-0221">Differentiation</keyword>
<keyword id="KW-0726">Sexual differentiation</keyword>
<name>JANB_DROOR</name>
<reference evidence="3" key="1">
    <citation type="journal article" date="2001" name="Mol. Biol. Evol.">
        <title>Molecular evolution of the ocnus and janus genes in the Drosophila melanogaster species subgroup.</title>
        <authorList>
            <person name="Parsch J."/>
            <person name="Meiklejohn C.D."/>
            <person name="Hauschteck-Jungen E."/>
            <person name="Hunziker P."/>
            <person name="Hartl D.L."/>
        </authorList>
    </citation>
    <scope>NUCLEOTIDE SEQUENCE [GENOMIC DNA]</scope>
</reference>
<organism evidence="3">
    <name type="scientific">Drosophila orena</name>
    <name type="common">Fruit fly</name>
    <dbReference type="NCBI Taxonomy" id="7233"/>
    <lineage>
        <taxon>Eukaryota</taxon>
        <taxon>Metazoa</taxon>
        <taxon>Ecdysozoa</taxon>
        <taxon>Arthropoda</taxon>
        <taxon>Hexapoda</taxon>
        <taxon>Insecta</taxon>
        <taxon>Pterygota</taxon>
        <taxon>Neoptera</taxon>
        <taxon>Endopterygota</taxon>
        <taxon>Diptera</taxon>
        <taxon>Brachycera</taxon>
        <taxon>Muscomorpha</taxon>
        <taxon>Ephydroidea</taxon>
        <taxon>Drosophilidae</taxon>
        <taxon>Drosophila</taxon>
        <taxon>Sophophora</taxon>
    </lineage>
</organism>
<proteinExistence type="inferred from homology"/>
<gene>
    <name type="primary">janB</name>
</gene>
<evidence type="ECO:0000250" key="1"/>
<evidence type="ECO:0000305" key="2"/>
<evidence type="ECO:0000312" key="3">
    <source>
        <dbReference type="EMBL" id="AAG50372.1"/>
    </source>
</evidence>
<feature type="chain" id="PRO_0000206167" description="Sex-regulated protein janus-B">
    <location>
        <begin position="1"/>
        <end position="140"/>
    </location>
</feature>
<feature type="active site" description="Proton acceptor" evidence="1">
    <location>
        <position position="69"/>
    </location>
</feature>
<feature type="binding site" evidence="1">
    <location>
        <position position="42"/>
    </location>
    <ligand>
        <name>substrate</name>
    </ligand>
</feature>
<feature type="binding site" evidence="1">
    <location>
        <begin position="110"/>
        <end position="112"/>
    </location>
    <ligand>
        <name>substrate</name>
    </ligand>
</feature>
<comment type="function">
    <text evidence="1">JanA and janB regulate somatic sex differentiation.</text>
</comment>
<comment type="similarity">
    <text evidence="2">Belongs to the janus family.</text>
</comment>
<dbReference type="EMBL" id="AY013351">
    <property type="protein sequence ID" value="AAG50372.1"/>
    <property type="molecule type" value="Genomic_DNA"/>
</dbReference>
<dbReference type="SMR" id="Q9BM89"/>
<dbReference type="GO" id="GO:0005829">
    <property type="term" value="C:cytosol"/>
    <property type="evidence" value="ECO:0007669"/>
    <property type="project" value="TreeGrafter"/>
</dbReference>
<dbReference type="GO" id="GO:0101006">
    <property type="term" value="F:protein histidine phosphatase activity"/>
    <property type="evidence" value="ECO:0007669"/>
    <property type="project" value="TreeGrafter"/>
</dbReference>
<dbReference type="GO" id="GO:0030154">
    <property type="term" value="P:cell differentiation"/>
    <property type="evidence" value="ECO:0007669"/>
    <property type="project" value="UniProtKB-KW"/>
</dbReference>
<dbReference type="GO" id="GO:0007548">
    <property type="term" value="P:sex differentiation"/>
    <property type="evidence" value="ECO:0000250"/>
    <property type="project" value="UniProtKB"/>
</dbReference>
<dbReference type="FunFam" id="3.50.20.20:FF:000002">
    <property type="entry name" value="Sex-regulated protein janus-B"/>
    <property type="match status" value="1"/>
</dbReference>
<dbReference type="Gene3D" id="3.50.20.20">
    <property type="entry name" value="Janus/Ocnus"/>
    <property type="match status" value="1"/>
</dbReference>
<dbReference type="InterPro" id="IPR007702">
    <property type="entry name" value="Janus"/>
</dbReference>
<dbReference type="InterPro" id="IPR038596">
    <property type="entry name" value="Janus_sf"/>
</dbReference>
<dbReference type="PANTHER" id="PTHR12258:SF5">
    <property type="entry name" value="BCDNA.GH02250-RELATED"/>
    <property type="match status" value="1"/>
</dbReference>
<dbReference type="PANTHER" id="PTHR12258">
    <property type="entry name" value="JANUS-A/JANUS-B"/>
    <property type="match status" value="1"/>
</dbReference>
<dbReference type="Pfam" id="PF05005">
    <property type="entry name" value="Ocnus"/>
    <property type="match status" value="1"/>
</dbReference>
<dbReference type="SUPFAM" id="SSF143724">
    <property type="entry name" value="PHP14-like"/>
    <property type="match status" value="1"/>
</dbReference>
<sequence length="140" mass="15848">MKMFKSLSLLPRNVSPFQKCYSTDLISLVGVPRVKITKGQNRYLLVNIHTHGFTKYGRVIVRGADVDNHLTIFDSILEELEPQGICAKILGGGRILNEADSKKMKIYGTSRTFGSADHTRTRNILQSWTTYKDFKISVKN</sequence>